<dbReference type="EMBL" id="AE006470">
    <property type="protein sequence ID" value="AAM72507.1"/>
    <property type="molecule type" value="Genomic_DNA"/>
</dbReference>
<dbReference type="RefSeq" id="NP_662165.1">
    <property type="nucleotide sequence ID" value="NC_002932.3"/>
</dbReference>
<dbReference type="RefSeq" id="WP_010932946.1">
    <property type="nucleotide sequence ID" value="NC_002932.3"/>
</dbReference>
<dbReference type="STRING" id="194439.CT1277"/>
<dbReference type="EnsemblBacteria" id="AAM72507">
    <property type="protein sequence ID" value="AAM72507"/>
    <property type="gene ID" value="CT1277"/>
</dbReference>
<dbReference type="KEGG" id="cte:CT1277"/>
<dbReference type="eggNOG" id="COG1342">
    <property type="taxonomic scope" value="Bacteria"/>
</dbReference>
<dbReference type="HOGENOM" id="CLU_094511_0_0_10"/>
<dbReference type="OrthoDB" id="280278at2"/>
<dbReference type="Proteomes" id="UP000001007">
    <property type="component" value="Chromosome"/>
</dbReference>
<dbReference type="Gene3D" id="1.10.10.10">
    <property type="entry name" value="Winged helix-like DNA-binding domain superfamily/Winged helix DNA-binding domain"/>
    <property type="match status" value="1"/>
</dbReference>
<dbReference type="HAMAP" id="MF_00674">
    <property type="entry name" value="UPF0251"/>
    <property type="match status" value="1"/>
</dbReference>
<dbReference type="InterPro" id="IPR013324">
    <property type="entry name" value="RNA_pol_sigma_r3/r4-like"/>
</dbReference>
<dbReference type="InterPro" id="IPR002852">
    <property type="entry name" value="UPF0251"/>
</dbReference>
<dbReference type="InterPro" id="IPR036388">
    <property type="entry name" value="WH-like_DNA-bd_sf"/>
</dbReference>
<dbReference type="PANTHER" id="PTHR37478">
    <property type="match status" value="1"/>
</dbReference>
<dbReference type="PANTHER" id="PTHR37478:SF2">
    <property type="entry name" value="UPF0251 PROTEIN TK0562"/>
    <property type="match status" value="1"/>
</dbReference>
<dbReference type="Pfam" id="PF02001">
    <property type="entry name" value="DUF134"/>
    <property type="match status" value="1"/>
</dbReference>
<dbReference type="SUPFAM" id="SSF88659">
    <property type="entry name" value="Sigma3 and sigma4 domains of RNA polymerase sigma factors"/>
    <property type="match status" value="1"/>
</dbReference>
<organism>
    <name type="scientific">Chlorobaculum tepidum (strain ATCC 49652 / DSM 12025 / NBRC 103806 / TLS)</name>
    <name type="common">Chlorobium tepidum</name>
    <dbReference type="NCBI Taxonomy" id="194439"/>
    <lineage>
        <taxon>Bacteria</taxon>
        <taxon>Pseudomonadati</taxon>
        <taxon>Chlorobiota</taxon>
        <taxon>Chlorobiia</taxon>
        <taxon>Chlorobiales</taxon>
        <taxon>Chlorobiaceae</taxon>
        <taxon>Chlorobaculum</taxon>
    </lineage>
</organism>
<feature type="chain" id="PRO_0000147587" description="UPF0251 protein CT1277">
    <location>
        <begin position="1"/>
        <end position="197"/>
    </location>
</feature>
<feature type="region of interest" description="Disordered" evidence="1">
    <location>
        <begin position="138"/>
        <end position="197"/>
    </location>
</feature>
<feature type="compositionally biased region" description="Basic and acidic residues" evidence="1">
    <location>
        <begin position="157"/>
        <end position="171"/>
    </location>
</feature>
<feature type="compositionally biased region" description="Gly residues" evidence="1">
    <location>
        <begin position="172"/>
        <end position="184"/>
    </location>
</feature>
<name>Y1277_CHLTE</name>
<accession>Q8KCY0</accession>
<evidence type="ECO:0000256" key="1">
    <source>
        <dbReference type="SAM" id="MobiDB-lite"/>
    </source>
</evidence>
<evidence type="ECO:0000305" key="2"/>
<keyword id="KW-1185">Reference proteome</keyword>
<proteinExistence type="inferred from homology"/>
<reference key="1">
    <citation type="journal article" date="2002" name="Proc. Natl. Acad. Sci. U.S.A.">
        <title>The complete genome sequence of Chlorobium tepidum TLS, a photosynthetic, anaerobic, green-sulfur bacterium.</title>
        <authorList>
            <person name="Eisen J.A."/>
            <person name="Nelson K.E."/>
            <person name="Paulsen I.T."/>
            <person name="Heidelberg J.F."/>
            <person name="Wu M."/>
            <person name="Dodson R.J."/>
            <person name="DeBoy R.T."/>
            <person name="Gwinn M.L."/>
            <person name="Nelson W.C."/>
            <person name="Haft D.H."/>
            <person name="Hickey E.K."/>
            <person name="Peterson J.D."/>
            <person name="Durkin A.S."/>
            <person name="Kolonay J.F."/>
            <person name="Yang F."/>
            <person name="Holt I.E."/>
            <person name="Umayam L.A."/>
            <person name="Mason T.M."/>
            <person name="Brenner M."/>
            <person name="Shea T.P."/>
            <person name="Parksey D.S."/>
            <person name="Nierman W.C."/>
            <person name="Feldblyum T.V."/>
            <person name="Hansen C.L."/>
            <person name="Craven M.B."/>
            <person name="Radune D."/>
            <person name="Vamathevan J.J."/>
            <person name="Khouri H.M."/>
            <person name="White O."/>
            <person name="Gruber T.M."/>
            <person name="Ketchum K.A."/>
            <person name="Venter J.C."/>
            <person name="Tettelin H."/>
            <person name="Bryant D.A."/>
            <person name="Fraser C.M."/>
        </authorList>
    </citation>
    <scope>NUCLEOTIDE SEQUENCE [LARGE SCALE GENOMIC DNA]</scope>
    <source>
        <strain>ATCC 49652 / DSM 12025 / NBRC 103806 / TLS</strain>
    </source>
</reference>
<gene>
    <name type="ordered locus">CT1277</name>
</gene>
<comment type="similarity">
    <text evidence="2">Belongs to the UPF0251 family.</text>
</comment>
<sequence length="197" mass="21345">MPRPQKCRAIAQDPEYRVFGPFCVGKREDEALVMSFDEFEAIRLADVEGLYQEEAARQMQISRQTFGNILASARKKLGEMLVLGKMLNVKGGNIMISQEERIFGCAACGHQWSLPYGIARPVECPSCSSQNIHRMSPGGGFGGGRRGGGKCRGFRSGLDRGPGHGEGRCQGEGHGNGNGNGNGQGRMRRNQQEGGEV</sequence>
<protein>
    <recommendedName>
        <fullName>UPF0251 protein CT1277</fullName>
    </recommendedName>
</protein>